<accession>Q82W45</accession>
<dbReference type="EC" id="1.8.1.2" evidence="1"/>
<dbReference type="EMBL" id="AL954747">
    <property type="protein sequence ID" value="CAD84763.1"/>
    <property type="molecule type" value="Genomic_DNA"/>
</dbReference>
<dbReference type="RefSeq" id="WP_011111463.1">
    <property type="nucleotide sequence ID" value="NC_004757.1"/>
</dbReference>
<dbReference type="SMR" id="Q82W45"/>
<dbReference type="STRING" id="228410.NE0852"/>
<dbReference type="GeneID" id="87104043"/>
<dbReference type="KEGG" id="neu:NE0852"/>
<dbReference type="eggNOG" id="COG0155">
    <property type="taxonomic scope" value="Bacteria"/>
</dbReference>
<dbReference type="HOGENOM" id="CLU_001975_3_2_4"/>
<dbReference type="OrthoDB" id="3189055at2"/>
<dbReference type="PhylomeDB" id="Q82W45"/>
<dbReference type="UniPathway" id="UPA00140">
    <property type="reaction ID" value="UER00207"/>
</dbReference>
<dbReference type="Proteomes" id="UP000001416">
    <property type="component" value="Chromosome"/>
</dbReference>
<dbReference type="GO" id="GO:0009337">
    <property type="term" value="C:sulfite reductase complex (NADPH)"/>
    <property type="evidence" value="ECO:0007669"/>
    <property type="project" value="InterPro"/>
</dbReference>
<dbReference type="GO" id="GO:0051539">
    <property type="term" value="F:4 iron, 4 sulfur cluster binding"/>
    <property type="evidence" value="ECO:0007669"/>
    <property type="project" value="UniProtKB-KW"/>
</dbReference>
<dbReference type="GO" id="GO:0020037">
    <property type="term" value="F:heme binding"/>
    <property type="evidence" value="ECO:0007669"/>
    <property type="project" value="InterPro"/>
</dbReference>
<dbReference type="GO" id="GO:0046872">
    <property type="term" value="F:metal ion binding"/>
    <property type="evidence" value="ECO:0007669"/>
    <property type="project" value="UniProtKB-KW"/>
</dbReference>
<dbReference type="GO" id="GO:0050661">
    <property type="term" value="F:NADP binding"/>
    <property type="evidence" value="ECO:0007669"/>
    <property type="project" value="InterPro"/>
</dbReference>
<dbReference type="GO" id="GO:0050311">
    <property type="term" value="F:sulfite reductase (ferredoxin) activity"/>
    <property type="evidence" value="ECO:0007669"/>
    <property type="project" value="TreeGrafter"/>
</dbReference>
<dbReference type="GO" id="GO:0004783">
    <property type="term" value="F:sulfite reductase (NADPH) activity"/>
    <property type="evidence" value="ECO:0007669"/>
    <property type="project" value="UniProtKB-UniRule"/>
</dbReference>
<dbReference type="GO" id="GO:0019344">
    <property type="term" value="P:cysteine biosynthetic process"/>
    <property type="evidence" value="ECO:0007669"/>
    <property type="project" value="UniProtKB-KW"/>
</dbReference>
<dbReference type="GO" id="GO:0070814">
    <property type="term" value="P:hydrogen sulfide biosynthetic process"/>
    <property type="evidence" value="ECO:0007669"/>
    <property type="project" value="UniProtKB-UniRule"/>
</dbReference>
<dbReference type="GO" id="GO:0000103">
    <property type="term" value="P:sulfate assimilation"/>
    <property type="evidence" value="ECO:0007669"/>
    <property type="project" value="UniProtKB-UniRule"/>
</dbReference>
<dbReference type="FunFam" id="3.30.413.10:FF:000003">
    <property type="entry name" value="Sulfite reductase [NADPH] hemoprotein beta-component"/>
    <property type="match status" value="1"/>
</dbReference>
<dbReference type="Gene3D" id="3.90.480.20">
    <property type="match status" value="1"/>
</dbReference>
<dbReference type="Gene3D" id="3.30.413.10">
    <property type="entry name" value="Sulfite Reductase Hemoprotein, domain 1"/>
    <property type="match status" value="2"/>
</dbReference>
<dbReference type="Gene3D" id="3.90.480.10">
    <property type="entry name" value="Sulfite Reductase Hemoprotein,Domain 2"/>
    <property type="match status" value="1"/>
</dbReference>
<dbReference type="HAMAP" id="MF_01540">
    <property type="entry name" value="CysI"/>
    <property type="match status" value="1"/>
</dbReference>
<dbReference type="InterPro" id="IPR011786">
    <property type="entry name" value="CysI"/>
</dbReference>
<dbReference type="InterPro" id="IPR005117">
    <property type="entry name" value="NiRdtase/SiRdtase_haem-b_fer"/>
</dbReference>
<dbReference type="InterPro" id="IPR036136">
    <property type="entry name" value="Nit/Sulf_reduc_fer-like_dom_sf"/>
</dbReference>
<dbReference type="InterPro" id="IPR006067">
    <property type="entry name" value="NO2/SO3_Rdtase_4Fe4S_dom"/>
</dbReference>
<dbReference type="InterPro" id="IPR045169">
    <property type="entry name" value="NO2/SO3_Rdtase_4Fe4S_prot"/>
</dbReference>
<dbReference type="InterPro" id="IPR045854">
    <property type="entry name" value="NO2/SO3_Rdtase_4Fe4S_sf"/>
</dbReference>
<dbReference type="InterPro" id="IPR006066">
    <property type="entry name" value="NO2/SO3_Rdtase_FeS/sirohaem_BS"/>
</dbReference>
<dbReference type="NCBIfam" id="NF010029">
    <property type="entry name" value="PRK13504.1"/>
    <property type="match status" value="1"/>
</dbReference>
<dbReference type="PANTHER" id="PTHR11493:SF47">
    <property type="entry name" value="SULFITE REDUCTASE [NADPH] SUBUNIT BETA"/>
    <property type="match status" value="1"/>
</dbReference>
<dbReference type="PANTHER" id="PTHR11493">
    <property type="entry name" value="SULFITE REDUCTASE [NADPH] SUBUNIT BETA-RELATED"/>
    <property type="match status" value="1"/>
</dbReference>
<dbReference type="Pfam" id="PF01077">
    <property type="entry name" value="NIR_SIR"/>
    <property type="match status" value="1"/>
</dbReference>
<dbReference type="Pfam" id="PF03460">
    <property type="entry name" value="NIR_SIR_ferr"/>
    <property type="match status" value="2"/>
</dbReference>
<dbReference type="PRINTS" id="PR00397">
    <property type="entry name" value="SIROHAEM"/>
</dbReference>
<dbReference type="SUPFAM" id="SSF56014">
    <property type="entry name" value="Nitrite and sulphite reductase 4Fe-4S domain-like"/>
    <property type="match status" value="2"/>
</dbReference>
<dbReference type="SUPFAM" id="SSF55124">
    <property type="entry name" value="Nitrite/Sulfite reductase N-terminal domain-like"/>
    <property type="match status" value="2"/>
</dbReference>
<dbReference type="PROSITE" id="PS00365">
    <property type="entry name" value="NIR_SIR"/>
    <property type="match status" value="1"/>
</dbReference>
<name>CYSI_NITEU</name>
<comment type="function">
    <text evidence="1">Component of the sulfite reductase complex that catalyzes the 6-electron reduction of sulfite to sulfide. This is one of several activities required for the biosynthesis of L-cysteine from sulfate.</text>
</comment>
<comment type="catalytic activity">
    <reaction evidence="1">
        <text>hydrogen sulfide + 3 NADP(+) + 3 H2O = sulfite + 3 NADPH + 4 H(+)</text>
        <dbReference type="Rhea" id="RHEA:13801"/>
        <dbReference type="ChEBI" id="CHEBI:15377"/>
        <dbReference type="ChEBI" id="CHEBI:15378"/>
        <dbReference type="ChEBI" id="CHEBI:17359"/>
        <dbReference type="ChEBI" id="CHEBI:29919"/>
        <dbReference type="ChEBI" id="CHEBI:57783"/>
        <dbReference type="ChEBI" id="CHEBI:58349"/>
        <dbReference type="EC" id="1.8.1.2"/>
    </reaction>
</comment>
<comment type="cofactor">
    <cofactor evidence="1">
        <name>siroheme</name>
        <dbReference type="ChEBI" id="CHEBI:60052"/>
    </cofactor>
    <text evidence="1">Binds 1 siroheme per subunit.</text>
</comment>
<comment type="cofactor">
    <cofactor evidence="1">
        <name>[4Fe-4S] cluster</name>
        <dbReference type="ChEBI" id="CHEBI:49883"/>
    </cofactor>
    <text evidence="1">Binds 1 [4Fe-4S] cluster per subunit.</text>
</comment>
<comment type="pathway">
    <text evidence="1">Sulfur metabolism; hydrogen sulfide biosynthesis; hydrogen sulfide from sulfite (NADPH route): step 1/1.</text>
</comment>
<comment type="subunit">
    <text evidence="1">Alpha(8)-beta(8). The alpha component is a flavoprotein, the beta component is a hemoprotein.</text>
</comment>
<comment type="similarity">
    <text evidence="1">Belongs to the nitrite and sulfite reductase 4Fe-4S domain family.</text>
</comment>
<organism>
    <name type="scientific">Nitrosomonas europaea (strain ATCC 19718 / CIP 103999 / KCTC 2705 / NBRC 14298)</name>
    <dbReference type="NCBI Taxonomy" id="228410"/>
    <lineage>
        <taxon>Bacteria</taxon>
        <taxon>Pseudomonadati</taxon>
        <taxon>Pseudomonadota</taxon>
        <taxon>Betaproteobacteria</taxon>
        <taxon>Nitrosomonadales</taxon>
        <taxon>Nitrosomonadaceae</taxon>
        <taxon>Nitrosomonas</taxon>
    </lineage>
</organism>
<feature type="chain" id="PRO_0000388505" description="Sulfite reductase [NADPH] hemoprotein beta-component">
    <location>
        <begin position="1"/>
        <end position="573"/>
    </location>
</feature>
<feature type="binding site" evidence="1">
    <location>
        <position position="438"/>
    </location>
    <ligand>
        <name>[4Fe-4S] cluster</name>
        <dbReference type="ChEBI" id="CHEBI:49883"/>
    </ligand>
</feature>
<feature type="binding site" evidence="1">
    <location>
        <position position="444"/>
    </location>
    <ligand>
        <name>[4Fe-4S] cluster</name>
        <dbReference type="ChEBI" id="CHEBI:49883"/>
    </ligand>
</feature>
<feature type="binding site" evidence="1">
    <location>
        <position position="483"/>
    </location>
    <ligand>
        <name>[4Fe-4S] cluster</name>
        <dbReference type="ChEBI" id="CHEBI:49883"/>
    </ligand>
</feature>
<feature type="binding site" evidence="1">
    <location>
        <position position="487"/>
    </location>
    <ligand>
        <name>[4Fe-4S] cluster</name>
        <dbReference type="ChEBI" id="CHEBI:49883"/>
    </ligand>
</feature>
<feature type="binding site" description="axial binding residue" evidence="1">
    <location>
        <position position="487"/>
    </location>
    <ligand>
        <name>siroheme</name>
        <dbReference type="ChEBI" id="CHEBI:60052"/>
    </ligand>
    <ligandPart>
        <name>Fe</name>
        <dbReference type="ChEBI" id="CHEBI:18248"/>
    </ligandPart>
</feature>
<evidence type="ECO:0000255" key="1">
    <source>
        <dbReference type="HAMAP-Rule" id="MF_01540"/>
    </source>
</evidence>
<sequence>MANTLPPTDRSCDISQPLERLSPDESLKAESDYLRGTIALGLLDRITSAVPGNDIKLMKFHGIYEQDDREIRDERRRQKLEPAFQFMIRVRLPGGICTTERWLKISELACAHGNETLRMTTRQTFQFHWVLKQNIVPLIRGLHEVLLDTVAACGDDSRGVMATVNPQFPALQAELAALAKTVSDHVIPKTRAYHEIWYGEERIASSEPEEPFYGQTYMPRKFKIGFVIPPNNDIDIYAQDLGYIAIIGENGKIAGFNVAIGGGMGRTDKAPHTYPRTASVIGFITPDRLISVTEAVMGVQRDYGNRADRSRARFKYTIDDKGLDWIKLAIEDRAGPLESARPYDFTSNADIYGWIESGDGFHHFTLFIENGRLNRDMLDKIAQIAHVHKGHFRLTPNQNLMIANVATADKPEIEALLRETGLIAFNERSVLRLNSMACVALPTCGLAMADSERYLPDLITKIEGILTRYNLQNEPITLRMTGCPNGCSRPFIAEIGLTGRAPGKYNLYLGGGFHGQRLNRLYRENIGEPAILETLNEVLGRYATERLPDEHFGDFTIRAGIIREVTEGRFSND</sequence>
<gene>
    <name evidence="1" type="primary">cysI</name>
    <name type="ordered locus">NE0852</name>
</gene>
<proteinExistence type="inferred from homology"/>
<keyword id="KW-0004">4Fe-4S</keyword>
<keyword id="KW-0028">Amino-acid biosynthesis</keyword>
<keyword id="KW-0198">Cysteine biosynthesis</keyword>
<keyword id="KW-0349">Heme</keyword>
<keyword id="KW-0408">Iron</keyword>
<keyword id="KW-0411">Iron-sulfur</keyword>
<keyword id="KW-0479">Metal-binding</keyword>
<keyword id="KW-0521">NADP</keyword>
<keyword id="KW-0560">Oxidoreductase</keyword>
<keyword id="KW-1185">Reference proteome</keyword>
<protein>
    <recommendedName>
        <fullName evidence="1">Sulfite reductase [NADPH] hemoprotein beta-component</fullName>
        <shortName evidence="1">SiR-HP</shortName>
        <shortName evidence="1">SiRHP</shortName>
        <ecNumber evidence="1">1.8.1.2</ecNumber>
    </recommendedName>
</protein>
<reference key="1">
    <citation type="journal article" date="2003" name="J. Bacteriol.">
        <title>Complete genome sequence of the ammonia-oxidizing bacterium and obligate chemolithoautotroph Nitrosomonas europaea.</title>
        <authorList>
            <person name="Chain P."/>
            <person name="Lamerdin J.E."/>
            <person name="Larimer F.W."/>
            <person name="Regala W."/>
            <person name="Lao V."/>
            <person name="Land M.L."/>
            <person name="Hauser L."/>
            <person name="Hooper A.B."/>
            <person name="Klotz M.G."/>
            <person name="Norton J."/>
            <person name="Sayavedra-Soto L.A."/>
            <person name="Arciero D.M."/>
            <person name="Hommes N.G."/>
            <person name="Whittaker M.M."/>
            <person name="Arp D.J."/>
        </authorList>
    </citation>
    <scope>NUCLEOTIDE SEQUENCE [LARGE SCALE GENOMIC DNA]</scope>
    <source>
        <strain>ATCC 19718 / CIP 103999 / KCTC 2705 / NBRC 14298</strain>
    </source>
</reference>